<gene>
    <name type="ordered locus">MGAS9429_Spy1808</name>
</gene>
<evidence type="ECO:0000255" key="1">
    <source>
        <dbReference type="HAMAP-Rule" id="MF_01507"/>
    </source>
</evidence>
<sequence length="89" mass="10364">MGFTDETVRFKLDDGDKRQISETLTAVYHSLDEKGYNPINQIVGYVLSGDPAYVPRYNDARNQIRKYERDEIVEELVRYYLQGNGIDVK</sequence>
<name>Y1808_STRPC</name>
<comment type="similarity">
    <text evidence="1">Belongs to the UPF0297 family.</text>
</comment>
<protein>
    <recommendedName>
        <fullName evidence="1">UPF0297 protein MGAS9429_Spy1808</fullName>
    </recommendedName>
</protein>
<organism>
    <name type="scientific">Streptococcus pyogenes serotype M12 (strain MGAS9429)</name>
    <dbReference type="NCBI Taxonomy" id="370551"/>
    <lineage>
        <taxon>Bacteria</taxon>
        <taxon>Bacillati</taxon>
        <taxon>Bacillota</taxon>
        <taxon>Bacilli</taxon>
        <taxon>Lactobacillales</taxon>
        <taxon>Streptococcaceae</taxon>
        <taxon>Streptococcus</taxon>
    </lineage>
</organism>
<proteinExistence type="inferred from homology"/>
<accession>Q1JJH8</accession>
<reference key="1">
    <citation type="journal article" date="2006" name="Proc. Natl. Acad. Sci. U.S.A.">
        <title>Molecular genetic anatomy of inter- and intraserotype variation in the human bacterial pathogen group A Streptococcus.</title>
        <authorList>
            <person name="Beres S.B."/>
            <person name="Richter E.W."/>
            <person name="Nagiec M.J."/>
            <person name="Sumby P."/>
            <person name="Porcella S.F."/>
            <person name="DeLeo F.R."/>
            <person name="Musser J.M."/>
        </authorList>
    </citation>
    <scope>NUCLEOTIDE SEQUENCE [LARGE SCALE GENOMIC DNA]</scope>
    <source>
        <strain>MGAS9429</strain>
    </source>
</reference>
<feature type="chain" id="PRO_0000248028" description="UPF0297 protein MGAS9429_Spy1808">
    <location>
        <begin position="1"/>
        <end position="89"/>
    </location>
</feature>
<dbReference type="EMBL" id="CP000259">
    <property type="protein sequence ID" value="ABF32995.1"/>
    <property type="molecule type" value="Genomic_DNA"/>
</dbReference>
<dbReference type="RefSeq" id="WP_002982194.1">
    <property type="nucleotide sequence ID" value="NC_008021.1"/>
</dbReference>
<dbReference type="SMR" id="Q1JJH8"/>
<dbReference type="KEGG" id="spk:MGAS9429_Spy1808"/>
<dbReference type="HOGENOM" id="CLU_162466_0_0_9"/>
<dbReference type="Proteomes" id="UP000002433">
    <property type="component" value="Chromosome"/>
</dbReference>
<dbReference type="HAMAP" id="MF_01507">
    <property type="entry name" value="UPF0297"/>
    <property type="match status" value="1"/>
</dbReference>
<dbReference type="InterPro" id="IPR009309">
    <property type="entry name" value="IreB"/>
</dbReference>
<dbReference type="NCBIfam" id="NF003997">
    <property type="entry name" value="PRK05473.1"/>
    <property type="match status" value="1"/>
</dbReference>
<dbReference type="PANTHER" id="PTHR40067">
    <property type="entry name" value="UPF0297 PROTEIN YRZL"/>
    <property type="match status" value="1"/>
</dbReference>
<dbReference type="PANTHER" id="PTHR40067:SF1">
    <property type="entry name" value="UPF0297 PROTEIN YRZL"/>
    <property type="match status" value="1"/>
</dbReference>
<dbReference type="Pfam" id="PF06135">
    <property type="entry name" value="IreB"/>
    <property type="match status" value="1"/>
</dbReference>
<dbReference type="PIRSF" id="PIRSF037258">
    <property type="entry name" value="DUF965_bac"/>
    <property type="match status" value="1"/>
</dbReference>